<proteinExistence type="evidence at protein level"/>
<gene>
    <name type="primary">AAMT3</name>
    <name type="synonym">OMT3</name>
</gene>
<protein>
    <recommendedName>
        <fullName>Anthranilate O-methyltransferase 3</fullName>
        <ecNumber>2.1.1.277</ecNumber>
    </recommendedName>
    <alternativeName>
        <fullName>Anthranilic acid methyltransferase 3</fullName>
    </alternativeName>
    <alternativeName>
        <fullName>Benzoate O-methyltransferase</fullName>
        <ecNumber>2.1.1.273</ecNumber>
    </alternativeName>
    <alternativeName>
        <fullName>O-methyltransferase 3</fullName>
    </alternativeName>
    <alternativeName>
        <fullName>Salicylate O-methyltransferas</fullName>
        <ecNumber>2.1.1.274</ecNumber>
    </alternativeName>
</protein>
<reference key="1">
    <citation type="journal article" date="2010" name="Plant Physiol.">
        <title>Herbivore-induced SABATH methyltransferases of maize that methylate anthranilic acid using s-adenosyl-L-methionine.</title>
        <authorList>
            <person name="Kollner T.G."/>
            <person name="Lenk C."/>
            <person name="Zhao N."/>
            <person name="Seidl-Adams I."/>
            <person name="Gershenzon J."/>
            <person name="Chen F."/>
            <person name="Degenhardt J."/>
        </authorList>
    </citation>
    <scope>NUCLEOTIDE SEQUENCE [MRNA]</scope>
    <scope>FUNCTION</scope>
    <scope>CATALYTIC ACTIVITY</scope>
    <scope>BIOPHYSICOCHEMICAL PROPERTIES</scope>
    <scope>INDUCTION BY HERBIVORY; JASMONIC ACID AND SALICYLIC ACID</scope>
    <source>
        <strain>cv. Delprim</strain>
    </source>
</reference>
<name>AAMT3_MAIZE</name>
<evidence type="ECO:0000250" key="1">
    <source>
        <dbReference type="UniProtKB" id="A0A6C0WW36"/>
    </source>
</evidence>
<evidence type="ECO:0000250" key="2">
    <source>
        <dbReference type="UniProtKB" id="B2KPR3"/>
    </source>
</evidence>
<evidence type="ECO:0000250" key="3">
    <source>
        <dbReference type="UniProtKB" id="Q9FLN8"/>
    </source>
</evidence>
<evidence type="ECO:0000256" key="4">
    <source>
        <dbReference type="SAM" id="MobiDB-lite"/>
    </source>
</evidence>
<evidence type="ECO:0000269" key="5">
    <source>
    </source>
</evidence>
<evidence type="ECO:0000305" key="6"/>
<feature type="chain" id="PRO_0000423913" description="Anthranilate O-methyltransferase 3">
    <location>
        <begin position="1"/>
        <end position="379"/>
    </location>
</feature>
<feature type="region of interest" description="Disordered" evidence="4">
    <location>
        <begin position="1"/>
        <end position="21"/>
    </location>
</feature>
<feature type="compositionally biased region" description="Basic and acidic residues" evidence="4">
    <location>
        <begin position="1"/>
        <end position="10"/>
    </location>
</feature>
<feature type="binding site" evidence="2">
    <location>
        <position position="20"/>
    </location>
    <ligand>
        <name>S-adenosyl-L-homocysteine</name>
        <dbReference type="ChEBI" id="CHEBI:57856"/>
    </ligand>
</feature>
<feature type="binding site" evidence="2">
    <location>
        <position position="27"/>
    </location>
    <ligand>
        <name>anthranilate</name>
        <dbReference type="ChEBI" id="CHEBI:16567"/>
    </ligand>
</feature>
<feature type="binding site" evidence="2">
    <location>
        <position position="61"/>
    </location>
    <ligand>
        <name>S-adenosyl-L-homocysteine</name>
        <dbReference type="ChEBI" id="CHEBI:57856"/>
    </ligand>
</feature>
<feature type="binding site" evidence="2">
    <location>
        <position position="66"/>
    </location>
    <ligand>
        <name>S-adenosyl-L-homocysteine</name>
        <dbReference type="ChEBI" id="CHEBI:57856"/>
    </ligand>
</feature>
<feature type="binding site" evidence="2">
    <location>
        <position position="100"/>
    </location>
    <ligand>
        <name>S-adenosyl-L-homocysteine</name>
        <dbReference type="ChEBI" id="CHEBI:57856"/>
    </ligand>
</feature>
<feature type="binding site" evidence="1">
    <location>
        <position position="101"/>
    </location>
    <ligand>
        <name>S-adenosyl-L-homocysteine</name>
        <dbReference type="ChEBI" id="CHEBI:57856"/>
    </ligand>
</feature>
<feature type="binding site" evidence="2">
    <location>
        <position position="143"/>
    </location>
    <ligand>
        <name>S-adenosyl-L-homocysteine</name>
        <dbReference type="ChEBI" id="CHEBI:57856"/>
    </ligand>
</feature>
<feature type="binding site" evidence="2">
    <location>
        <position position="144"/>
    </location>
    <ligand>
        <name>S-adenosyl-L-homocysteine</name>
        <dbReference type="ChEBI" id="CHEBI:57856"/>
    </ligand>
</feature>
<feature type="binding site" evidence="2">
    <location>
        <position position="164"/>
    </location>
    <ligand>
        <name>anthranilate</name>
        <dbReference type="ChEBI" id="CHEBI:16567"/>
    </ligand>
</feature>
<feature type="binding site" evidence="2">
    <location>
        <position position="165"/>
    </location>
    <ligand>
        <name>anthranilate</name>
        <dbReference type="ChEBI" id="CHEBI:16567"/>
    </ligand>
</feature>
<feature type="binding site" evidence="3">
    <location>
        <position position="265"/>
    </location>
    <ligand>
        <name>Mg(2+)</name>
        <dbReference type="ChEBI" id="CHEBI:18420"/>
    </ligand>
</feature>
<feature type="binding site" evidence="3">
    <location>
        <position position="267"/>
    </location>
    <ligand>
        <name>Mg(2+)</name>
        <dbReference type="ChEBI" id="CHEBI:18420"/>
    </ligand>
</feature>
<dbReference type="EC" id="2.1.1.277"/>
<dbReference type="EC" id="2.1.1.273"/>
<dbReference type="EC" id="2.1.1.274"/>
<dbReference type="EMBL" id="HM242247">
    <property type="protein sequence ID" value="ADI87452.1"/>
    <property type="molecule type" value="mRNA"/>
</dbReference>
<dbReference type="RefSeq" id="NP_001182138.1">
    <property type="nucleotide sequence ID" value="NM_001195209.1"/>
</dbReference>
<dbReference type="SMR" id="D9J100"/>
<dbReference type="FunCoup" id="D9J100">
    <property type="interactions" value="14"/>
</dbReference>
<dbReference type="STRING" id="4577.D9J100"/>
<dbReference type="PaxDb" id="4577-GRMZM2G063438_P01"/>
<dbReference type="GeneID" id="103637798"/>
<dbReference type="KEGG" id="zma:103637798"/>
<dbReference type="eggNOG" id="ENOG502QQVK">
    <property type="taxonomic scope" value="Eukaryota"/>
</dbReference>
<dbReference type="InParanoid" id="D9J100"/>
<dbReference type="OrthoDB" id="742322at2759"/>
<dbReference type="BRENDA" id="2.1.1.277">
    <property type="organism ID" value="6752"/>
</dbReference>
<dbReference type="SABIO-RK" id="D9J100"/>
<dbReference type="Proteomes" id="UP000007305">
    <property type="component" value="Unplaced"/>
</dbReference>
<dbReference type="ExpressionAtlas" id="D9J100">
    <property type="expression patterns" value="baseline and differential"/>
</dbReference>
<dbReference type="GO" id="GO:0080150">
    <property type="term" value="F:S-adenosyl-L-methionine:benzoic acid carboxyl methyl transferase activity"/>
    <property type="evidence" value="ECO:0007669"/>
    <property type="project" value="RHEA"/>
</dbReference>
<dbReference type="GO" id="GO:0008757">
    <property type="term" value="F:S-adenosylmethionine-dependent methyltransferase activity"/>
    <property type="evidence" value="ECO:0000318"/>
    <property type="project" value="GO_Central"/>
</dbReference>
<dbReference type="GO" id="GO:0006952">
    <property type="term" value="P:defense response"/>
    <property type="evidence" value="ECO:0007669"/>
    <property type="project" value="UniProtKB-KW"/>
</dbReference>
<dbReference type="GO" id="GO:0032259">
    <property type="term" value="P:methylation"/>
    <property type="evidence" value="ECO:0000318"/>
    <property type="project" value="GO_Central"/>
</dbReference>
<dbReference type="Gene3D" id="1.10.1200.270">
    <property type="entry name" value="Methyltransferase, alpha-helical capping domain"/>
    <property type="match status" value="1"/>
</dbReference>
<dbReference type="Gene3D" id="3.40.50.150">
    <property type="entry name" value="Vaccinia Virus protein VP39"/>
    <property type="match status" value="1"/>
</dbReference>
<dbReference type="InterPro" id="IPR005299">
    <property type="entry name" value="MeTrfase_7"/>
</dbReference>
<dbReference type="InterPro" id="IPR042086">
    <property type="entry name" value="MeTrfase_capping"/>
</dbReference>
<dbReference type="InterPro" id="IPR029063">
    <property type="entry name" value="SAM-dependent_MTases_sf"/>
</dbReference>
<dbReference type="PANTHER" id="PTHR31009">
    <property type="entry name" value="S-ADENOSYL-L-METHIONINE:CARBOXYL METHYLTRANSFERASE FAMILY PROTEIN"/>
    <property type="match status" value="1"/>
</dbReference>
<dbReference type="Pfam" id="PF03492">
    <property type="entry name" value="Methyltransf_7"/>
    <property type="match status" value="1"/>
</dbReference>
<dbReference type="SUPFAM" id="SSF53335">
    <property type="entry name" value="S-adenosyl-L-methionine-dependent methyltransferases"/>
    <property type="match status" value="1"/>
</dbReference>
<sequence length="379" mass="43220">MPMRIERDLHMATGNGETSYTKNSRIQEKVMFQIKPVLEEATRAAYSALLPQTMVVADLGCSSGPNTLRFVSEVIGIIARHCKEHDRRHDYPQLQFFLNDLPGNDFNNLFLLIQQFNKSMARNHKGEAAEALPPCYISGLPGSFYTRIFPSESVHLFHSLFSVHWHSQASEQLKDTKNKCLDIYITKNMPPSMVKLFQQQFEKDFSLFLKLRYEELVSGGQMVLTFIGRKHEDVFTGESNHLYGLLAQSLKSLVDEGLVEKEKLESFYLPIYSPSVGEVEAIVKQVGLFNMNHVKVFEINWDPYGDSEGDDVHDSIRSGENVAKCLRAVMEPLVASQFGEHILDKLFKEYARRVAKHLENEKTKHAILVLSIEKAIIHV</sequence>
<comment type="function">
    <text evidence="5">Methyltransferase involved in the biosynthesis of methyl anthranilate in response to stresses. Utilizes anthranilic acid as substrate. Produces exclusively the O-methyl ester. Can also use benzoic acid as substrate. Low activity with salicylic acid.</text>
</comment>
<comment type="catalytic activity">
    <reaction evidence="5">
        <text>anthranilate + S-adenosyl-L-methionine = O-methyl anthranilate + S-adenosyl-L-homocysteine</text>
        <dbReference type="Rhea" id="RHEA:36103"/>
        <dbReference type="ChEBI" id="CHEBI:16567"/>
        <dbReference type="ChEBI" id="CHEBI:57856"/>
        <dbReference type="ChEBI" id="CHEBI:59789"/>
        <dbReference type="ChEBI" id="CHEBI:73244"/>
        <dbReference type="EC" id="2.1.1.277"/>
    </reaction>
</comment>
<comment type="catalytic activity">
    <reaction evidence="5">
        <text>benzoate + S-adenosyl-L-methionine = methyl benzoate + S-adenosyl-L-homocysteine</text>
        <dbReference type="Rhea" id="RHEA:36099"/>
        <dbReference type="ChEBI" id="CHEBI:16150"/>
        <dbReference type="ChEBI" id="CHEBI:57856"/>
        <dbReference type="ChEBI" id="CHEBI:59789"/>
        <dbReference type="ChEBI" id="CHEBI:72775"/>
        <dbReference type="EC" id="2.1.1.273"/>
    </reaction>
</comment>
<comment type="catalytic activity">
    <reaction evidence="5">
        <text>salicylate + S-adenosyl-L-methionine = methyl salicylate + S-adenosyl-L-homocysteine</text>
        <dbReference type="Rhea" id="RHEA:36095"/>
        <dbReference type="ChEBI" id="CHEBI:30762"/>
        <dbReference type="ChEBI" id="CHEBI:31832"/>
        <dbReference type="ChEBI" id="CHEBI:57856"/>
        <dbReference type="ChEBI" id="CHEBI:59789"/>
        <dbReference type="EC" id="2.1.1.274"/>
    </reaction>
</comment>
<comment type="biophysicochemical properties">
    <kinetics>
        <KM evidence="5">76 uM for S-adenosyl-L-methionine</KM>
    </kinetics>
</comment>
<comment type="induction">
    <text evidence="5">Up-regulated by herbivory and jasmonic acid, but not by salicylic acid.</text>
</comment>
<comment type="similarity">
    <text evidence="6">Belongs to the methyltransferase superfamily. Type-7 methyltransferase family. SABATH subfamily.</text>
</comment>
<accession>D9J100</accession>
<organism>
    <name type="scientific">Zea mays</name>
    <name type="common">Maize</name>
    <dbReference type="NCBI Taxonomy" id="4577"/>
    <lineage>
        <taxon>Eukaryota</taxon>
        <taxon>Viridiplantae</taxon>
        <taxon>Streptophyta</taxon>
        <taxon>Embryophyta</taxon>
        <taxon>Tracheophyta</taxon>
        <taxon>Spermatophyta</taxon>
        <taxon>Magnoliopsida</taxon>
        <taxon>Liliopsida</taxon>
        <taxon>Poales</taxon>
        <taxon>Poaceae</taxon>
        <taxon>PACMAD clade</taxon>
        <taxon>Panicoideae</taxon>
        <taxon>Andropogonodae</taxon>
        <taxon>Andropogoneae</taxon>
        <taxon>Tripsacinae</taxon>
        <taxon>Zea</taxon>
    </lineage>
</organism>
<keyword id="KW-0460">Magnesium</keyword>
<keyword id="KW-0479">Metal-binding</keyword>
<keyword id="KW-0489">Methyltransferase</keyword>
<keyword id="KW-0611">Plant defense</keyword>
<keyword id="KW-1185">Reference proteome</keyword>
<keyword id="KW-0949">S-adenosyl-L-methionine</keyword>
<keyword id="KW-0808">Transferase</keyword>